<comment type="function">
    <text evidence="1">An accessory protein needed during the final step in the assembly of 30S ribosomal subunit, possibly for assembly of the head region. Essential for efficient processing of 16S rRNA. May be needed both before and after RbfA during the maturation of 16S rRNA. It has affinity for free ribosomal 30S subunits but not for 70S ribosomes.</text>
</comment>
<comment type="subunit">
    <text evidence="1">Binds ribosomal protein uS19.</text>
</comment>
<comment type="subcellular location">
    <subcellularLocation>
        <location evidence="1">Cytoplasm</location>
    </subcellularLocation>
</comment>
<comment type="domain">
    <text evidence="1">The PRC barrel domain binds ribosomal protein uS19.</text>
</comment>
<comment type="similarity">
    <text evidence="1">Belongs to the RimM family.</text>
</comment>
<name>RIMM_LEGPH</name>
<accession>Q5ZYH5</accession>
<protein>
    <recommendedName>
        <fullName evidence="1">Ribosome maturation factor RimM</fullName>
    </recommendedName>
</protein>
<proteinExistence type="inferred from homology"/>
<feature type="chain" id="PRO_0000163307" description="Ribosome maturation factor RimM">
    <location>
        <begin position="1"/>
        <end position="169"/>
    </location>
</feature>
<feature type="domain" description="PRC barrel" evidence="1">
    <location>
        <begin position="97"/>
        <end position="169"/>
    </location>
</feature>
<organism>
    <name type="scientific">Legionella pneumophila subsp. pneumophila (strain Philadelphia 1 / ATCC 33152 / DSM 7513)</name>
    <dbReference type="NCBI Taxonomy" id="272624"/>
    <lineage>
        <taxon>Bacteria</taxon>
        <taxon>Pseudomonadati</taxon>
        <taxon>Pseudomonadota</taxon>
        <taxon>Gammaproteobacteria</taxon>
        <taxon>Legionellales</taxon>
        <taxon>Legionellaceae</taxon>
        <taxon>Legionella</taxon>
    </lineage>
</organism>
<sequence length="169" mass="19229">MNNKTNWVIIGRFGRPHGIKGFVTVHSFTDPADNILRYNDWHVFLNKQWQPLKLLTIEVRSKAIIAQIEGYPKRELVSALTNLDIGVQESQLAALAPGEYYWYQLIGMSVINSKGDLFGKVVEIMPTGSNDVLVVEGEKRHLIPYLPGQFVINVDESQQVITVDWDMNF</sequence>
<evidence type="ECO:0000255" key="1">
    <source>
        <dbReference type="HAMAP-Rule" id="MF_00014"/>
    </source>
</evidence>
<gene>
    <name evidence="1" type="primary">rimM</name>
    <name type="ordered locus">lpg0397</name>
</gene>
<keyword id="KW-0143">Chaperone</keyword>
<keyword id="KW-0963">Cytoplasm</keyword>
<keyword id="KW-1185">Reference proteome</keyword>
<keyword id="KW-0690">Ribosome biogenesis</keyword>
<keyword id="KW-0698">rRNA processing</keyword>
<reference key="1">
    <citation type="journal article" date="2004" name="Science">
        <title>The genomic sequence of the accidental pathogen Legionella pneumophila.</title>
        <authorList>
            <person name="Chien M."/>
            <person name="Morozova I."/>
            <person name="Shi S."/>
            <person name="Sheng H."/>
            <person name="Chen J."/>
            <person name="Gomez S.M."/>
            <person name="Asamani G."/>
            <person name="Hill K."/>
            <person name="Nuara J."/>
            <person name="Feder M."/>
            <person name="Rineer J."/>
            <person name="Greenberg J.J."/>
            <person name="Steshenko V."/>
            <person name="Park S.H."/>
            <person name="Zhao B."/>
            <person name="Teplitskaya E."/>
            <person name="Edwards J.R."/>
            <person name="Pampou S."/>
            <person name="Georghiou A."/>
            <person name="Chou I.-C."/>
            <person name="Iannuccilli W."/>
            <person name="Ulz M.E."/>
            <person name="Kim D.H."/>
            <person name="Geringer-Sameth A."/>
            <person name="Goldsberry C."/>
            <person name="Morozov P."/>
            <person name="Fischer S.G."/>
            <person name="Segal G."/>
            <person name="Qu X."/>
            <person name="Rzhetsky A."/>
            <person name="Zhang P."/>
            <person name="Cayanis E."/>
            <person name="De Jong P.J."/>
            <person name="Ju J."/>
            <person name="Kalachikov S."/>
            <person name="Shuman H.A."/>
            <person name="Russo J.J."/>
        </authorList>
    </citation>
    <scope>NUCLEOTIDE SEQUENCE [LARGE SCALE GENOMIC DNA]</scope>
    <source>
        <strain>Philadelphia 1 / ATCC 33152 / DSM 7513</strain>
    </source>
</reference>
<dbReference type="EMBL" id="AE017354">
    <property type="protein sequence ID" value="AAU26494.1"/>
    <property type="molecule type" value="Genomic_DNA"/>
</dbReference>
<dbReference type="RefSeq" id="WP_010946146.1">
    <property type="nucleotide sequence ID" value="NC_002942.5"/>
</dbReference>
<dbReference type="RefSeq" id="YP_094441.1">
    <property type="nucleotide sequence ID" value="NC_002942.5"/>
</dbReference>
<dbReference type="SMR" id="Q5ZYH5"/>
<dbReference type="STRING" id="272624.lpg0397"/>
<dbReference type="PaxDb" id="272624-lpg0397"/>
<dbReference type="GeneID" id="57034401"/>
<dbReference type="KEGG" id="lpn:lpg0397"/>
<dbReference type="PATRIC" id="fig|272624.6.peg.411"/>
<dbReference type="eggNOG" id="COG0806">
    <property type="taxonomic scope" value="Bacteria"/>
</dbReference>
<dbReference type="HOGENOM" id="CLU_077636_1_0_6"/>
<dbReference type="OrthoDB" id="9783509at2"/>
<dbReference type="Proteomes" id="UP000000609">
    <property type="component" value="Chromosome"/>
</dbReference>
<dbReference type="GO" id="GO:0005737">
    <property type="term" value="C:cytoplasm"/>
    <property type="evidence" value="ECO:0007669"/>
    <property type="project" value="UniProtKB-SubCell"/>
</dbReference>
<dbReference type="GO" id="GO:0005840">
    <property type="term" value="C:ribosome"/>
    <property type="evidence" value="ECO:0007669"/>
    <property type="project" value="InterPro"/>
</dbReference>
<dbReference type="GO" id="GO:0043022">
    <property type="term" value="F:ribosome binding"/>
    <property type="evidence" value="ECO:0007669"/>
    <property type="project" value="InterPro"/>
</dbReference>
<dbReference type="GO" id="GO:0042274">
    <property type="term" value="P:ribosomal small subunit biogenesis"/>
    <property type="evidence" value="ECO:0007669"/>
    <property type="project" value="UniProtKB-UniRule"/>
</dbReference>
<dbReference type="GO" id="GO:0006364">
    <property type="term" value="P:rRNA processing"/>
    <property type="evidence" value="ECO:0007669"/>
    <property type="project" value="UniProtKB-UniRule"/>
</dbReference>
<dbReference type="Gene3D" id="2.30.30.240">
    <property type="entry name" value="PRC-barrel domain"/>
    <property type="match status" value="1"/>
</dbReference>
<dbReference type="Gene3D" id="2.40.30.60">
    <property type="entry name" value="RimM"/>
    <property type="match status" value="1"/>
</dbReference>
<dbReference type="HAMAP" id="MF_00014">
    <property type="entry name" value="Ribosome_mat_RimM"/>
    <property type="match status" value="1"/>
</dbReference>
<dbReference type="InterPro" id="IPR011033">
    <property type="entry name" value="PRC_barrel-like_sf"/>
</dbReference>
<dbReference type="InterPro" id="IPR056792">
    <property type="entry name" value="PRC_RimM"/>
</dbReference>
<dbReference type="InterPro" id="IPR011961">
    <property type="entry name" value="RimM"/>
</dbReference>
<dbReference type="InterPro" id="IPR002676">
    <property type="entry name" value="RimM_N"/>
</dbReference>
<dbReference type="InterPro" id="IPR036976">
    <property type="entry name" value="RimM_N_sf"/>
</dbReference>
<dbReference type="InterPro" id="IPR009000">
    <property type="entry name" value="Transl_B-barrel_sf"/>
</dbReference>
<dbReference type="NCBIfam" id="TIGR02273">
    <property type="entry name" value="16S_RimM"/>
    <property type="match status" value="1"/>
</dbReference>
<dbReference type="PANTHER" id="PTHR33692">
    <property type="entry name" value="RIBOSOME MATURATION FACTOR RIMM"/>
    <property type="match status" value="1"/>
</dbReference>
<dbReference type="PANTHER" id="PTHR33692:SF1">
    <property type="entry name" value="RIBOSOME MATURATION FACTOR RIMM"/>
    <property type="match status" value="1"/>
</dbReference>
<dbReference type="Pfam" id="PF24986">
    <property type="entry name" value="PRC_RimM"/>
    <property type="match status" value="1"/>
</dbReference>
<dbReference type="Pfam" id="PF01782">
    <property type="entry name" value="RimM"/>
    <property type="match status" value="1"/>
</dbReference>
<dbReference type="SUPFAM" id="SSF50346">
    <property type="entry name" value="PRC-barrel domain"/>
    <property type="match status" value="1"/>
</dbReference>
<dbReference type="SUPFAM" id="SSF50447">
    <property type="entry name" value="Translation proteins"/>
    <property type="match status" value="1"/>
</dbReference>